<evidence type="ECO:0000255" key="1"/>
<evidence type="ECO:0000255" key="2">
    <source>
        <dbReference type="PROSITE-ProRule" id="PRU00040"/>
    </source>
</evidence>
<evidence type="ECO:0000269" key="3">
    <source>
    </source>
</evidence>
<evidence type="ECO:0000269" key="4">
    <source>
    </source>
</evidence>
<evidence type="ECO:0000269" key="5">
    <source>
    </source>
</evidence>
<evidence type="ECO:0000269" key="6">
    <source>
    </source>
</evidence>
<evidence type="ECO:0000305" key="7"/>
<keyword id="KW-1003">Cell membrane</keyword>
<keyword id="KW-1015">Disulfide bond</keyword>
<keyword id="KW-0325">Glycoprotein</keyword>
<keyword id="KW-0333">Golgi apparatus</keyword>
<keyword id="KW-0430">Lectin</keyword>
<keyword id="KW-0472">Membrane</keyword>
<keyword id="KW-1267">Proteomics identification</keyword>
<keyword id="KW-1185">Reference proteome</keyword>
<keyword id="KW-0735">Signal-anchor</keyword>
<keyword id="KW-0812">Transmembrane</keyword>
<keyword id="KW-1133">Transmembrane helix</keyword>
<keyword id="KW-0832">Ubl conjugation</keyword>
<reference key="1">
    <citation type="journal article" date="1997" name="Immunogenetics">
        <title>AICL, a new activation induced antigen encoded by the human NK gene complex.</title>
        <authorList>
            <person name="Hamann J."/>
            <person name="Montgomery K.T."/>
            <person name="Lau S."/>
            <person name="Kucherlapati R."/>
            <person name="van Lier R.A.W."/>
        </authorList>
    </citation>
    <scope>NUCLEOTIDE SEQUENCE [MRNA]</scope>
</reference>
<reference key="2">
    <citation type="journal article" date="1999" name="Gene">
        <title>Selection of cDNAs encoding putative type II membrane proteins on the cell surface from a human full-length cDNA bank.</title>
        <authorList>
            <person name="Yokoyama-Kobayashi M."/>
            <person name="Yamaguchi T."/>
            <person name="Sekine S."/>
            <person name="Kato S."/>
        </authorList>
    </citation>
    <scope>NUCLEOTIDE SEQUENCE [MRNA]</scope>
</reference>
<reference key="3">
    <citation type="journal article" date="2004" name="Nat. Genet.">
        <title>Complete sequencing and characterization of 21,243 full-length human cDNAs.</title>
        <authorList>
            <person name="Ota T."/>
            <person name="Suzuki Y."/>
            <person name="Nishikawa T."/>
            <person name="Otsuki T."/>
            <person name="Sugiyama T."/>
            <person name="Irie R."/>
            <person name="Wakamatsu A."/>
            <person name="Hayashi K."/>
            <person name="Sato H."/>
            <person name="Nagai K."/>
            <person name="Kimura K."/>
            <person name="Makita H."/>
            <person name="Sekine M."/>
            <person name="Obayashi M."/>
            <person name="Nishi T."/>
            <person name="Shibahara T."/>
            <person name="Tanaka T."/>
            <person name="Ishii S."/>
            <person name="Yamamoto J."/>
            <person name="Saito K."/>
            <person name="Kawai Y."/>
            <person name="Isono Y."/>
            <person name="Nakamura Y."/>
            <person name="Nagahari K."/>
            <person name="Murakami K."/>
            <person name="Yasuda T."/>
            <person name="Iwayanagi T."/>
            <person name="Wagatsuma M."/>
            <person name="Shiratori A."/>
            <person name="Sudo H."/>
            <person name="Hosoiri T."/>
            <person name="Kaku Y."/>
            <person name="Kodaira H."/>
            <person name="Kondo H."/>
            <person name="Sugawara M."/>
            <person name="Takahashi M."/>
            <person name="Kanda K."/>
            <person name="Yokoi T."/>
            <person name="Furuya T."/>
            <person name="Kikkawa E."/>
            <person name="Omura Y."/>
            <person name="Abe K."/>
            <person name="Kamihara K."/>
            <person name="Katsuta N."/>
            <person name="Sato K."/>
            <person name="Tanikawa M."/>
            <person name="Yamazaki M."/>
            <person name="Ninomiya K."/>
            <person name="Ishibashi T."/>
            <person name="Yamashita H."/>
            <person name="Murakawa K."/>
            <person name="Fujimori K."/>
            <person name="Tanai H."/>
            <person name="Kimata M."/>
            <person name="Watanabe M."/>
            <person name="Hiraoka S."/>
            <person name="Chiba Y."/>
            <person name="Ishida S."/>
            <person name="Ono Y."/>
            <person name="Takiguchi S."/>
            <person name="Watanabe S."/>
            <person name="Yosida M."/>
            <person name="Hotuta T."/>
            <person name="Kusano J."/>
            <person name="Kanehori K."/>
            <person name="Takahashi-Fujii A."/>
            <person name="Hara H."/>
            <person name="Tanase T.-O."/>
            <person name="Nomura Y."/>
            <person name="Togiya S."/>
            <person name="Komai F."/>
            <person name="Hara R."/>
            <person name="Takeuchi K."/>
            <person name="Arita M."/>
            <person name="Imose N."/>
            <person name="Musashino K."/>
            <person name="Yuuki H."/>
            <person name="Oshima A."/>
            <person name="Sasaki N."/>
            <person name="Aotsuka S."/>
            <person name="Yoshikawa Y."/>
            <person name="Matsunawa H."/>
            <person name="Ichihara T."/>
            <person name="Shiohata N."/>
            <person name="Sano S."/>
            <person name="Moriya S."/>
            <person name="Momiyama H."/>
            <person name="Satoh N."/>
            <person name="Takami S."/>
            <person name="Terashima Y."/>
            <person name="Suzuki O."/>
            <person name="Nakagawa S."/>
            <person name="Senoh A."/>
            <person name="Mizoguchi H."/>
            <person name="Goto Y."/>
            <person name="Shimizu F."/>
            <person name="Wakebe H."/>
            <person name="Hishigaki H."/>
            <person name="Watanabe T."/>
            <person name="Sugiyama A."/>
            <person name="Takemoto M."/>
            <person name="Kawakami B."/>
            <person name="Yamazaki M."/>
            <person name="Watanabe K."/>
            <person name="Kumagai A."/>
            <person name="Itakura S."/>
            <person name="Fukuzumi Y."/>
            <person name="Fujimori Y."/>
            <person name="Komiyama M."/>
            <person name="Tashiro H."/>
            <person name="Tanigami A."/>
            <person name="Fujiwara T."/>
            <person name="Ono T."/>
            <person name="Yamada K."/>
            <person name="Fujii Y."/>
            <person name="Ozaki K."/>
            <person name="Hirao M."/>
            <person name="Ohmori Y."/>
            <person name="Kawabata A."/>
            <person name="Hikiji T."/>
            <person name="Kobatake N."/>
            <person name="Inagaki H."/>
            <person name="Ikema Y."/>
            <person name="Okamoto S."/>
            <person name="Okitani R."/>
            <person name="Kawakami T."/>
            <person name="Noguchi S."/>
            <person name="Itoh T."/>
            <person name="Shigeta K."/>
            <person name="Senba T."/>
            <person name="Matsumura K."/>
            <person name="Nakajima Y."/>
            <person name="Mizuno T."/>
            <person name="Morinaga M."/>
            <person name="Sasaki M."/>
            <person name="Togashi T."/>
            <person name="Oyama M."/>
            <person name="Hata H."/>
            <person name="Watanabe M."/>
            <person name="Komatsu T."/>
            <person name="Mizushima-Sugano J."/>
            <person name="Satoh T."/>
            <person name="Shirai Y."/>
            <person name="Takahashi Y."/>
            <person name="Nakagawa K."/>
            <person name="Okumura K."/>
            <person name="Nagase T."/>
            <person name="Nomura N."/>
            <person name="Kikuchi H."/>
            <person name="Masuho Y."/>
            <person name="Yamashita R."/>
            <person name="Nakai K."/>
            <person name="Yada T."/>
            <person name="Nakamura Y."/>
            <person name="Ohara O."/>
            <person name="Isogai T."/>
            <person name="Sugano S."/>
        </authorList>
    </citation>
    <scope>NUCLEOTIDE SEQUENCE [LARGE SCALE MRNA]</scope>
    <source>
        <tissue>Colon</tissue>
    </source>
</reference>
<reference key="4">
    <citation type="submission" date="2005-07" db="EMBL/GenBank/DDBJ databases">
        <authorList>
            <person name="Mural R.J."/>
            <person name="Istrail S."/>
            <person name="Sutton G.G."/>
            <person name="Florea L."/>
            <person name="Halpern A.L."/>
            <person name="Mobarry C.M."/>
            <person name="Lippert R."/>
            <person name="Walenz B."/>
            <person name="Shatkay H."/>
            <person name="Dew I."/>
            <person name="Miller J.R."/>
            <person name="Flanigan M.J."/>
            <person name="Edwards N.J."/>
            <person name="Bolanos R."/>
            <person name="Fasulo D."/>
            <person name="Halldorsson B.V."/>
            <person name="Hannenhalli S."/>
            <person name="Turner R."/>
            <person name="Yooseph S."/>
            <person name="Lu F."/>
            <person name="Nusskern D.R."/>
            <person name="Shue B.C."/>
            <person name="Zheng X.H."/>
            <person name="Zhong F."/>
            <person name="Delcher A.L."/>
            <person name="Huson D.H."/>
            <person name="Kravitz S.A."/>
            <person name="Mouchard L."/>
            <person name="Reinert K."/>
            <person name="Remington K.A."/>
            <person name="Clark A.G."/>
            <person name="Waterman M.S."/>
            <person name="Eichler E.E."/>
            <person name="Adams M.D."/>
            <person name="Hunkapiller M.W."/>
            <person name="Myers E.W."/>
            <person name="Venter J.C."/>
        </authorList>
    </citation>
    <scope>NUCLEOTIDE SEQUENCE [LARGE SCALE GENOMIC DNA]</scope>
</reference>
<reference key="5">
    <citation type="journal article" date="2004" name="Genome Res.">
        <title>The status, quality, and expansion of the NIH full-length cDNA project: the Mammalian Gene Collection (MGC).</title>
        <authorList>
            <consortium name="The MGC Project Team"/>
        </authorList>
    </citation>
    <scope>NUCLEOTIDE SEQUENCE [LARGE SCALE MRNA]</scope>
    <source>
        <tissue>Urinary bladder</tissue>
    </source>
</reference>
<reference key="6">
    <citation type="submission" date="2002-08" db="EMBL/GenBank/DDBJ databases">
        <title>Study on gene response of IFN inducing.</title>
        <authorList>
            <person name="Li Q."/>
            <person name="Zhao H."/>
            <person name="Wang L."/>
            <person name="Liu L."/>
            <person name="Dong C."/>
            <person name="Dong S."/>
            <person name="Wang J."/>
        </authorList>
    </citation>
    <scope>NUCLEOTIDE SEQUENCE [MRNA] OF 1-137</scope>
</reference>
<reference key="7">
    <citation type="journal article" date="2015" name="Proteomics">
        <title>N-terminome analysis of the human mitochondrial proteome.</title>
        <authorList>
            <person name="Vaca Jacome A.S."/>
            <person name="Rabilloud T."/>
            <person name="Schaeffer-Reiss C."/>
            <person name="Rompais M."/>
            <person name="Ayoub D."/>
            <person name="Lane L."/>
            <person name="Bairoch A."/>
            <person name="Van Dorsselaer A."/>
            <person name="Carapito C."/>
        </authorList>
    </citation>
    <scope>IDENTIFICATION BY MASS SPECTROMETRY [LARGE SCALE ANALYSIS]</scope>
</reference>
<reference key="8">
    <citation type="journal article" date="2006" name="Nat. Immunol.">
        <title>Mutual activation of natural killer cells and monocytes mediated by NKp80-AICL interaction.</title>
        <authorList>
            <person name="Welte S."/>
            <person name="Kuttruff S."/>
            <person name="Waldhauer I."/>
            <person name="Steinle A."/>
        </authorList>
    </citation>
    <scope>FUNCTION</scope>
    <scope>INTERACTION WITH KLRF1</scope>
    <scope>INDUCTION BY TLR</scope>
</reference>
<reference key="9">
    <citation type="journal article" date="2008" name="Proc. Natl. Acad. Sci. U.S.A.">
        <title>Down-regulation of NKG2D and NKp80 ligands by Kaposi's sarcoma-associated herpesvirus K5 protects against NK cell cytotoxicity.</title>
        <authorList>
            <person name="Thomas M."/>
            <person name="Boname J.M."/>
            <person name="Field S."/>
            <person name="Nejentsev S."/>
            <person name="Salio M."/>
            <person name="Cerundolo V."/>
            <person name="Wills M."/>
            <person name="Lehner P.J."/>
        </authorList>
    </citation>
    <scope>FUNCTION</scope>
    <scope>UBIQUITINATION BY HUMAN HERPESVIRUS 8 PROTEIN K5 (MICROBIAL INFECTION)</scope>
</reference>
<reference key="10">
    <citation type="journal article" date="2013" name="Blood">
        <title>Genetically coupled receptor-ligand pair NKp80-AICL enables autonomous control of human NK cell responses.</title>
        <authorList>
            <person name="Klimosch S.N."/>
            <person name="Bartel Y."/>
            <person name="Wiemann S."/>
            <person name="Steinle A."/>
        </authorList>
    </citation>
    <scope>FUNCTION</scope>
    <scope>SUBCELLULAR LOCATION</scope>
    <scope>INDUCTION BY IL12 AND IL18</scope>
</reference>
<reference key="11">
    <citation type="journal article" date="2018" name="J. Immunol.">
        <title>Cellular Mechanisms Controlling Surfacing of AICL Glycoproteins, Cognate Ligands of the Activating NK Receptor NKp80.</title>
        <authorList>
            <person name="Neuss S."/>
            <person name="Bartel Y."/>
            <person name="Born C."/>
            <person name="Weil S."/>
            <person name="Koch J."/>
            <person name="Behrends C."/>
            <person name="Hoffmeister M."/>
            <person name="Steinle A."/>
        </authorList>
    </citation>
    <scope>SUBUNIT</scope>
    <scope>MUTAGENESIS OF CYS-87</scope>
    <scope>SUBCELLULAR LOCATION</scope>
    <scope>GLYCOSYLATION</scope>
</reference>
<feature type="chain" id="PRO_0000046611" description="C-type lectin domain family 2 member B">
    <location>
        <begin position="1"/>
        <end position="149"/>
    </location>
</feature>
<feature type="topological domain" description="Cytoplasmic" evidence="1">
    <location>
        <begin position="1"/>
        <end position="7"/>
    </location>
</feature>
<feature type="transmembrane region" description="Helical; Signal-anchor for type II membrane protein" evidence="1">
    <location>
        <begin position="8"/>
        <end position="25"/>
    </location>
</feature>
<feature type="topological domain" description="Extracellular" evidence="1">
    <location>
        <begin position="26"/>
        <end position="149"/>
    </location>
</feature>
<feature type="domain" description="C-type lectin" evidence="2">
    <location>
        <begin position="42"/>
        <end position="145"/>
    </location>
</feature>
<feature type="glycosylation site" description="N-linked (GlcNAc...) asparagine" evidence="1">
    <location>
        <position position="57"/>
    </location>
</feature>
<feature type="glycosylation site" description="N-linked (GlcNAc...) asparagine" evidence="1">
    <location>
        <position position="62"/>
    </location>
</feature>
<feature type="glycosylation site" description="N-linked (GlcNAc...) asparagine" evidence="1">
    <location>
        <position position="100"/>
    </location>
</feature>
<feature type="disulfide bond" evidence="2">
    <location>
        <begin position="35"/>
        <end position="46"/>
    </location>
</feature>
<feature type="disulfide bond" evidence="2">
    <location>
        <begin position="63"/>
        <end position="144"/>
    </location>
</feature>
<feature type="disulfide bond" evidence="2">
    <location>
        <begin position="123"/>
        <end position="136"/>
    </location>
</feature>
<feature type="mutagenesis site" description="Complete loss of dimerization." evidence="6">
    <original>C</original>
    <variation>S</variation>
    <location>
        <position position="87"/>
    </location>
</feature>
<feature type="sequence conflict" description="In Ref. 5; AAH05254." evidence="7" ref="5">
    <original>M</original>
    <variation>T</variation>
    <location>
        <position position="79"/>
    </location>
</feature>
<feature type="sequence conflict" description="In Ref. 1; CAA65480." evidence="7" ref="1">
    <original>D</original>
    <variation>H</variation>
    <location>
        <position position="107"/>
    </location>
</feature>
<feature type="sequence conflict" description="In Ref. 6." evidence="7" ref="6">
    <original>ATARCY</original>
    <variation>TTAQIQ</variation>
    <location>
        <begin position="132"/>
        <end position="137"/>
    </location>
</feature>
<protein>
    <recommendedName>
        <fullName>C-type lectin domain family 2 member B</fullName>
    </recommendedName>
    <alternativeName>
        <fullName>Activation-induced C-type lectin</fullName>
    </alternativeName>
    <alternativeName>
        <fullName>C-type lectin superfamily member 2</fullName>
    </alternativeName>
    <alternativeName>
        <fullName>IFN-alpha-2b-inducing-related protein 1</fullName>
    </alternativeName>
</protein>
<sequence>MMTKHKKCFIIVGVLITTNIITLIVKLTRDSQSLCPYDWIGFQNKCYYFSKEEGDWNSSKYNCSTQHADLTIIDNIEEMNFLRRYKCSSDHWIGLKMAKNRTGQWVDGATFTKSFGMRGSEGCAYLSDDGAATARCYTERKWICRKRIH</sequence>
<proteinExistence type="evidence at protein level"/>
<organism>
    <name type="scientific">Homo sapiens</name>
    <name type="common">Human</name>
    <dbReference type="NCBI Taxonomy" id="9606"/>
    <lineage>
        <taxon>Eukaryota</taxon>
        <taxon>Metazoa</taxon>
        <taxon>Chordata</taxon>
        <taxon>Craniata</taxon>
        <taxon>Vertebrata</taxon>
        <taxon>Euteleostomi</taxon>
        <taxon>Mammalia</taxon>
        <taxon>Eutheria</taxon>
        <taxon>Euarchontoglires</taxon>
        <taxon>Primates</taxon>
        <taxon>Haplorrhini</taxon>
        <taxon>Catarrhini</taxon>
        <taxon>Hominidae</taxon>
        <taxon>Homo</taxon>
    </lineage>
</organism>
<comment type="function">
    <text evidence="3 4 5">Membrane-bound protein expressed on myeloid cells which acts as a ligand to stimulate the activating receptor NKp80/KLRF1, expressed on the surface of natural killer (NK) cells. In turn, stimulates NK-cell cytotoxicity and cytokine production leading to the cytolysis of malignant CLEC2B-expressing myeloid cells.</text>
</comment>
<comment type="subunit">
    <text evidence="3 6">Homodimer (PubMed:29980609). Interacts with NKp80/KLRF1 (PubMed:17057721).</text>
</comment>
<comment type="interaction">
    <interactant intactId="EBI-13350535">
        <id>Q92478</id>
    </interactant>
    <interactant intactId="EBI-640741">
        <id>P01023</id>
        <label>A2M</label>
    </interactant>
    <organismsDiffer>false</organismsDiffer>
    <experiments>3</experiments>
</comment>
<comment type="interaction">
    <interactant intactId="EBI-13350535">
        <id>Q92478</id>
    </interactant>
    <interactant intactId="EBI-13350535">
        <id>Q92478</id>
        <label>CLEC2B</label>
    </interactant>
    <organismsDiffer>false</organismsDiffer>
    <experiments>2</experiments>
</comment>
<comment type="interaction">
    <interactant intactId="EBI-13350535">
        <id>Q92478</id>
    </interactant>
    <interactant intactId="EBI-10968534">
        <id>P50570-2</id>
        <label>DNM2</label>
    </interactant>
    <organismsDiffer>false</organismsDiffer>
    <experiments>3</experiments>
</comment>
<comment type="interaction">
    <interactant intactId="EBI-13350535">
        <id>Q92478</id>
    </interactant>
    <interactant intactId="EBI-466029">
        <id>P42858</id>
        <label>HTT</label>
    </interactant>
    <organismsDiffer>false</organismsDiffer>
    <experiments>9</experiments>
</comment>
<comment type="interaction">
    <interactant intactId="EBI-13350535">
        <id>Q92478</id>
    </interactant>
    <interactant intactId="EBI-25847109">
        <id>O14656-2</id>
        <label>TOR1A</label>
    </interactant>
    <organismsDiffer>false</organismsDiffer>
    <experiments>3</experiments>
</comment>
<comment type="subcellular location">
    <subcellularLocation>
        <location evidence="5 6">Cell membrane</location>
        <topology evidence="7">Single-pass type II membrane protein</topology>
    </subcellularLocation>
    <subcellularLocation>
        <location evidence="5">Golgi apparatus membrane</location>
    </subcellularLocation>
    <text evidence="5">Resting NK cells contain intracellular stores of CLEC2B associated with the Golgi complex.</text>
</comment>
<comment type="tissue specificity">
    <text>Expressed preferentially in lymphoid tissues, and in most hematopoietic cell types.</text>
</comment>
<comment type="induction">
    <text evidence="3 5">By TLR activation (PubMed:17057721). By IL12 and IL18 (PubMed:23929856).</text>
</comment>
<comment type="PTM">
    <text evidence="4">(Microbial infection) Ubiquitinated by human herpesvirus 8 protein K5, leading to endolysosomal degradation.</text>
</comment>
<comment type="PTM">
    <text evidence="6">N-linked glycosylated; required to enable surface expression and the extent of surface expression correlates with the number of functional conventional N-glycosylation sites.</text>
</comment>
<comment type="online information" name="Functional Glycomics Gateway - Glycan Binding">
    <link uri="http://www.functionalglycomics.org/glycomics/GBPServlet?&amp;operationType=view&amp;cbpId=cbp_hum_Ctlect_236"/>
    <text>CD69 homolog</text>
</comment>
<accession>Q92478</accession>
<accession>B2R9U1</accession>
<accession>Q8IZE9</accession>
<accession>Q9BS74</accession>
<accession>Q9UQB4</accession>
<dbReference type="EMBL" id="X96719">
    <property type="protein sequence ID" value="CAA65480.1"/>
    <property type="molecule type" value="mRNA"/>
</dbReference>
<dbReference type="EMBL" id="AB015628">
    <property type="protein sequence ID" value="BAA76495.1"/>
    <property type="molecule type" value="mRNA"/>
</dbReference>
<dbReference type="EMBL" id="AK313916">
    <property type="protein sequence ID" value="BAG36638.1"/>
    <property type="molecule type" value="mRNA"/>
</dbReference>
<dbReference type="EMBL" id="CH471094">
    <property type="protein sequence ID" value="EAW96127.1"/>
    <property type="molecule type" value="Genomic_DNA"/>
</dbReference>
<dbReference type="EMBL" id="BC005254">
    <property type="protein sequence ID" value="AAH05254.1"/>
    <property type="molecule type" value="mRNA"/>
</dbReference>
<dbReference type="EMBL" id="AY142147">
    <property type="protein sequence ID" value="AAN46677.1"/>
    <property type="molecule type" value="mRNA"/>
</dbReference>
<dbReference type="CCDS" id="CCDS8605.1"/>
<dbReference type="RefSeq" id="NP_005118.2">
    <property type="nucleotide sequence ID" value="NM_005127.2"/>
</dbReference>
<dbReference type="SMR" id="Q92478"/>
<dbReference type="BioGRID" id="115300">
    <property type="interactions" value="176"/>
</dbReference>
<dbReference type="DIP" id="DIP-58612N"/>
<dbReference type="FunCoup" id="Q92478">
    <property type="interactions" value="223"/>
</dbReference>
<dbReference type="IntAct" id="Q92478">
    <property type="interactions" value="150"/>
</dbReference>
<dbReference type="STRING" id="9606.ENSP00000228438"/>
<dbReference type="GlyCosmos" id="Q92478">
    <property type="glycosylation" value="3 sites, No reported glycans"/>
</dbReference>
<dbReference type="GlyGen" id="Q92478">
    <property type="glycosylation" value="5 sites, 1 O-linked glycan (1 site)"/>
</dbReference>
<dbReference type="iPTMnet" id="Q92478"/>
<dbReference type="PhosphoSitePlus" id="Q92478"/>
<dbReference type="BioMuta" id="CLEC2B"/>
<dbReference type="DMDM" id="33860149"/>
<dbReference type="jPOST" id="Q92478"/>
<dbReference type="MassIVE" id="Q92478"/>
<dbReference type="PaxDb" id="9606-ENSP00000228438"/>
<dbReference type="PeptideAtlas" id="Q92478"/>
<dbReference type="ProteomicsDB" id="75260"/>
<dbReference type="Pumba" id="Q92478"/>
<dbReference type="Antibodypedia" id="1470">
    <property type="antibodies" value="113 antibodies from 19 providers"/>
</dbReference>
<dbReference type="DNASU" id="9976"/>
<dbReference type="Ensembl" id="ENST00000228438.3">
    <property type="protein sequence ID" value="ENSP00000228438.2"/>
    <property type="gene ID" value="ENSG00000110852.5"/>
</dbReference>
<dbReference type="GeneID" id="9976"/>
<dbReference type="KEGG" id="hsa:9976"/>
<dbReference type="MANE-Select" id="ENST00000228438.3">
    <property type="protein sequence ID" value="ENSP00000228438.2"/>
    <property type="RefSeq nucleotide sequence ID" value="NM_005127.3"/>
    <property type="RefSeq protein sequence ID" value="NP_005118.2"/>
</dbReference>
<dbReference type="UCSC" id="uc001qwn.4">
    <property type="organism name" value="human"/>
</dbReference>
<dbReference type="AGR" id="HGNC:2053"/>
<dbReference type="CTD" id="9976"/>
<dbReference type="DisGeNET" id="9976"/>
<dbReference type="GeneCards" id="CLEC2B"/>
<dbReference type="HGNC" id="HGNC:2053">
    <property type="gene designation" value="CLEC2B"/>
</dbReference>
<dbReference type="HPA" id="ENSG00000110852">
    <property type="expression patterns" value="Tissue enhanced (bone)"/>
</dbReference>
<dbReference type="MIM" id="603242">
    <property type="type" value="gene"/>
</dbReference>
<dbReference type="neXtProt" id="NX_Q92478"/>
<dbReference type="OpenTargets" id="ENSG00000110852"/>
<dbReference type="PharmGKB" id="PA26582"/>
<dbReference type="VEuPathDB" id="HostDB:ENSG00000110852"/>
<dbReference type="eggNOG" id="KOG4297">
    <property type="taxonomic scope" value="Eukaryota"/>
</dbReference>
<dbReference type="GeneTree" id="ENSGT00940000163321"/>
<dbReference type="HOGENOM" id="CLU_049894_8_4_1"/>
<dbReference type="InParanoid" id="Q92478"/>
<dbReference type="OMA" id="DDWIGFQ"/>
<dbReference type="OrthoDB" id="8935730at2759"/>
<dbReference type="PAN-GO" id="Q92478">
    <property type="GO annotations" value="1 GO annotation based on evolutionary models"/>
</dbReference>
<dbReference type="PhylomeDB" id="Q92478"/>
<dbReference type="TreeFam" id="TF351467"/>
<dbReference type="PathwayCommons" id="Q92478"/>
<dbReference type="Reactome" id="R-HSA-198933">
    <property type="pathway name" value="Immunoregulatory interactions between a Lymphoid and a non-Lymphoid cell"/>
</dbReference>
<dbReference type="SignaLink" id="Q92478"/>
<dbReference type="BioGRID-ORCS" id="9976">
    <property type="hits" value="11 hits in 1124 CRISPR screens"/>
</dbReference>
<dbReference type="ChiTaRS" id="CLEC2B">
    <property type="organism name" value="human"/>
</dbReference>
<dbReference type="GeneWiki" id="CLEC2B"/>
<dbReference type="GenomeRNAi" id="9976"/>
<dbReference type="Pharos" id="Q92478">
    <property type="development level" value="Tbio"/>
</dbReference>
<dbReference type="PRO" id="PR:Q92478"/>
<dbReference type="Proteomes" id="UP000005640">
    <property type="component" value="Chromosome 12"/>
</dbReference>
<dbReference type="RNAct" id="Q92478">
    <property type="molecule type" value="protein"/>
</dbReference>
<dbReference type="Bgee" id="ENSG00000110852">
    <property type="expression patterns" value="Expressed in upper leg skin and 195 other cell types or tissues"/>
</dbReference>
<dbReference type="ExpressionAtlas" id="Q92478">
    <property type="expression patterns" value="baseline and differential"/>
</dbReference>
<dbReference type="GO" id="GO:0000139">
    <property type="term" value="C:Golgi membrane"/>
    <property type="evidence" value="ECO:0007669"/>
    <property type="project" value="UniProtKB-SubCell"/>
</dbReference>
<dbReference type="GO" id="GO:0005886">
    <property type="term" value="C:plasma membrane"/>
    <property type="evidence" value="ECO:0000314"/>
    <property type="project" value="UniProt"/>
</dbReference>
<dbReference type="GO" id="GO:0030246">
    <property type="term" value="F:carbohydrate binding"/>
    <property type="evidence" value="ECO:0000304"/>
    <property type="project" value="ProtInc"/>
</dbReference>
<dbReference type="GO" id="GO:0042802">
    <property type="term" value="F:identical protein binding"/>
    <property type="evidence" value="ECO:0000353"/>
    <property type="project" value="IntAct"/>
</dbReference>
<dbReference type="GO" id="GO:0048018">
    <property type="term" value="F:receptor ligand activity"/>
    <property type="evidence" value="ECO:0000314"/>
    <property type="project" value="UniProt"/>
</dbReference>
<dbReference type="GO" id="GO:0051132">
    <property type="term" value="P:NK T cell activation"/>
    <property type="evidence" value="ECO:0000314"/>
    <property type="project" value="UniProt"/>
</dbReference>
<dbReference type="CDD" id="cd03593">
    <property type="entry name" value="CLECT_NK_receptors_like"/>
    <property type="match status" value="1"/>
</dbReference>
<dbReference type="FunFam" id="3.10.100.10:FF:000096">
    <property type="entry name" value="C-type lectin domain family 2 member B"/>
    <property type="match status" value="1"/>
</dbReference>
<dbReference type="Gene3D" id="3.10.100.10">
    <property type="entry name" value="Mannose-Binding Protein A, subunit A"/>
    <property type="match status" value="1"/>
</dbReference>
<dbReference type="InterPro" id="IPR001304">
    <property type="entry name" value="C-type_lectin-like"/>
</dbReference>
<dbReference type="InterPro" id="IPR016186">
    <property type="entry name" value="C-type_lectin-like/link_sf"/>
</dbReference>
<dbReference type="InterPro" id="IPR050828">
    <property type="entry name" value="C-type_lectin/matrix_domain"/>
</dbReference>
<dbReference type="InterPro" id="IPR016187">
    <property type="entry name" value="CTDL_fold"/>
</dbReference>
<dbReference type="InterPro" id="IPR033992">
    <property type="entry name" value="NKR-like_CTLD"/>
</dbReference>
<dbReference type="PANTHER" id="PTHR45710:SF15">
    <property type="entry name" value="C-TYPE LECTIN DOMAIN FAMILY 2 MEMBER B"/>
    <property type="match status" value="1"/>
</dbReference>
<dbReference type="PANTHER" id="PTHR45710">
    <property type="entry name" value="C-TYPE LECTIN DOMAIN-CONTAINING PROTEIN 180"/>
    <property type="match status" value="1"/>
</dbReference>
<dbReference type="Pfam" id="PF00059">
    <property type="entry name" value="Lectin_C"/>
    <property type="match status" value="1"/>
</dbReference>
<dbReference type="SMART" id="SM00034">
    <property type="entry name" value="CLECT"/>
    <property type="match status" value="1"/>
</dbReference>
<dbReference type="SUPFAM" id="SSF56436">
    <property type="entry name" value="C-type lectin-like"/>
    <property type="match status" value="1"/>
</dbReference>
<dbReference type="PROSITE" id="PS50041">
    <property type="entry name" value="C_TYPE_LECTIN_2"/>
    <property type="match status" value="1"/>
</dbReference>
<gene>
    <name type="primary">CLEC2B</name>
    <name type="synonym">AICL</name>
    <name type="synonym">CLECSF2</name>
    <name type="synonym">IFNRG1</name>
</gene>
<name>CLC2B_HUMAN</name>